<protein>
    <recommendedName>
        <fullName evidence="1">Tyrosine--tRNA ligase</fullName>
        <ecNumber evidence="1">6.1.1.1</ecNumber>
    </recommendedName>
    <alternativeName>
        <fullName evidence="1">Tyrosyl-tRNA synthetase</fullName>
        <shortName evidence="1">TyrRS</shortName>
    </alternativeName>
</protein>
<sequence>MKSVEEQLALIKRGADELLVEAELVEKLKRGQPLRIKAGFDPTAPDLHLGHTVLINKLRQFQDLGHQVIFLIGDFTGMIGDPSGKSATRPPLTREQVLDYAETYKSQVFKILDPAKTEVAFNSTWMDKLSPADFIRLSSQYTVARMLERDDFDKRYKSNQSIAIHEFLYPLVQGYDSVALKADVELGGTDQKFNLLMGRELQRAYGQEPQCILTMPLLEGLDGVKKMSKSLGNYVGIQEAPGIMYSKLVSIPDSLMWRYFELLSFRSMEEINGLRADCEAGANPRDIKIKLAEELVARFHGEEAAATAHRSAGNRMKEGELPDDLPEISVAAIEDMPISAVLNKAGLVKNAAVARDLLASGGVRIDGEVVDRSFIVKLGATHVCQAGKKAFGRITLVSDESSK</sequence>
<name>SYY_PSESM</name>
<comment type="function">
    <text evidence="1">Catalyzes the attachment of tyrosine to tRNA(Tyr) in a two-step reaction: tyrosine is first activated by ATP to form Tyr-AMP and then transferred to the acceptor end of tRNA(Tyr).</text>
</comment>
<comment type="catalytic activity">
    <reaction evidence="1">
        <text>tRNA(Tyr) + L-tyrosine + ATP = L-tyrosyl-tRNA(Tyr) + AMP + diphosphate + H(+)</text>
        <dbReference type="Rhea" id="RHEA:10220"/>
        <dbReference type="Rhea" id="RHEA-COMP:9706"/>
        <dbReference type="Rhea" id="RHEA-COMP:9707"/>
        <dbReference type="ChEBI" id="CHEBI:15378"/>
        <dbReference type="ChEBI" id="CHEBI:30616"/>
        <dbReference type="ChEBI" id="CHEBI:33019"/>
        <dbReference type="ChEBI" id="CHEBI:58315"/>
        <dbReference type="ChEBI" id="CHEBI:78442"/>
        <dbReference type="ChEBI" id="CHEBI:78536"/>
        <dbReference type="ChEBI" id="CHEBI:456215"/>
        <dbReference type="EC" id="6.1.1.1"/>
    </reaction>
</comment>
<comment type="subunit">
    <text evidence="1">Homodimer.</text>
</comment>
<comment type="subcellular location">
    <subcellularLocation>
        <location evidence="1">Cytoplasm</location>
    </subcellularLocation>
</comment>
<comment type="similarity">
    <text evidence="1">Belongs to the class-I aminoacyl-tRNA synthetase family. TyrS type 2 subfamily.</text>
</comment>
<keyword id="KW-0030">Aminoacyl-tRNA synthetase</keyword>
<keyword id="KW-0067">ATP-binding</keyword>
<keyword id="KW-0963">Cytoplasm</keyword>
<keyword id="KW-0436">Ligase</keyword>
<keyword id="KW-0547">Nucleotide-binding</keyword>
<keyword id="KW-0648">Protein biosynthesis</keyword>
<keyword id="KW-1185">Reference proteome</keyword>
<keyword id="KW-0694">RNA-binding</keyword>
<proteinExistence type="inferred from homology"/>
<gene>
    <name evidence="1" type="primary">tyrS</name>
    <name type="ordered locus">PSPTO_0609</name>
</gene>
<reference key="1">
    <citation type="journal article" date="2003" name="Proc. Natl. Acad. Sci. U.S.A.">
        <title>The complete genome sequence of the Arabidopsis and tomato pathogen Pseudomonas syringae pv. tomato DC3000.</title>
        <authorList>
            <person name="Buell C.R."/>
            <person name="Joardar V."/>
            <person name="Lindeberg M."/>
            <person name="Selengut J."/>
            <person name="Paulsen I.T."/>
            <person name="Gwinn M.L."/>
            <person name="Dodson R.J."/>
            <person name="DeBoy R.T."/>
            <person name="Durkin A.S."/>
            <person name="Kolonay J.F."/>
            <person name="Madupu R."/>
            <person name="Daugherty S.C."/>
            <person name="Brinkac L.M."/>
            <person name="Beanan M.J."/>
            <person name="Haft D.H."/>
            <person name="Nelson W.C."/>
            <person name="Davidsen T.M."/>
            <person name="Zafar N."/>
            <person name="Zhou L."/>
            <person name="Liu J."/>
            <person name="Yuan Q."/>
            <person name="Khouri H.M."/>
            <person name="Fedorova N.B."/>
            <person name="Tran B."/>
            <person name="Russell D."/>
            <person name="Berry K.J."/>
            <person name="Utterback T.R."/>
            <person name="Van Aken S.E."/>
            <person name="Feldblyum T.V."/>
            <person name="D'Ascenzo M."/>
            <person name="Deng W.-L."/>
            <person name="Ramos A.R."/>
            <person name="Alfano J.R."/>
            <person name="Cartinhour S."/>
            <person name="Chatterjee A.K."/>
            <person name="Delaney T.P."/>
            <person name="Lazarowitz S.G."/>
            <person name="Martin G.B."/>
            <person name="Schneider D.J."/>
            <person name="Tang X."/>
            <person name="Bender C.L."/>
            <person name="White O."/>
            <person name="Fraser C.M."/>
            <person name="Collmer A."/>
        </authorList>
    </citation>
    <scope>NUCLEOTIDE SEQUENCE [LARGE SCALE GENOMIC DNA]</scope>
    <source>
        <strain>ATCC BAA-871 / DC3000</strain>
    </source>
</reference>
<organism>
    <name type="scientific">Pseudomonas syringae pv. tomato (strain ATCC BAA-871 / DC3000)</name>
    <dbReference type="NCBI Taxonomy" id="223283"/>
    <lineage>
        <taxon>Bacteria</taxon>
        <taxon>Pseudomonadati</taxon>
        <taxon>Pseudomonadota</taxon>
        <taxon>Gammaproteobacteria</taxon>
        <taxon>Pseudomonadales</taxon>
        <taxon>Pseudomonadaceae</taxon>
        <taxon>Pseudomonas</taxon>
    </lineage>
</organism>
<accession>Q889Y8</accession>
<feature type="chain" id="PRO_0000236756" description="Tyrosine--tRNA ligase">
    <location>
        <begin position="1"/>
        <end position="403"/>
    </location>
</feature>
<feature type="domain" description="S4 RNA-binding" evidence="1">
    <location>
        <begin position="336"/>
        <end position="396"/>
    </location>
</feature>
<feature type="short sequence motif" description="'HIGH' region">
    <location>
        <begin position="42"/>
        <end position="51"/>
    </location>
</feature>
<feature type="short sequence motif" description="'KMSKS' region">
    <location>
        <begin position="226"/>
        <end position="230"/>
    </location>
</feature>
<feature type="binding site" evidence="1">
    <location>
        <position position="229"/>
    </location>
    <ligand>
        <name>ATP</name>
        <dbReference type="ChEBI" id="CHEBI:30616"/>
    </ligand>
</feature>
<evidence type="ECO:0000255" key="1">
    <source>
        <dbReference type="HAMAP-Rule" id="MF_02007"/>
    </source>
</evidence>
<dbReference type="EC" id="6.1.1.1" evidence="1"/>
<dbReference type="EMBL" id="AE016853">
    <property type="protein sequence ID" value="AAO54151.1"/>
    <property type="molecule type" value="Genomic_DNA"/>
</dbReference>
<dbReference type="RefSeq" id="NP_790456.1">
    <property type="nucleotide sequence ID" value="NC_004578.1"/>
</dbReference>
<dbReference type="RefSeq" id="WP_010201143.1">
    <property type="nucleotide sequence ID" value="NC_004578.1"/>
</dbReference>
<dbReference type="SMR" id="Q889Y8"/>
<dbReference type="STRING" id="223283.PSPTO_0609"/>
<dbReference type="GeneID" id="1182220"/>
<dbReference type="KEGG" id="pst:PSPTO_0609"/>
<dbReference type="PATRIC" id="fig|223283.9.peg.613"/>
<dbReference type="eggNOG" id="COG0162">
    <property type="taxonomic scope" value="Bacteria"/>
</dbReference>
<dbReference type="HOGENOM" id="CLU_024003_5_0_6"/>
<dbReference type="OrthoDB" id="9804243at2"/>
<dbReference type="PhylomeDB" id="Q889Y8"/>
<dbReference type="Proteomes" id="UP000002515">
    <property type="component" value="Chromosome"/>
</dbReference>
<dbReference type="GO" id="GO:0005829">
    <property type="term" value="C:cytosol"/>
    <property type="evidence" value="ECO:0007669"/>
    <property type="project" value="TreeGrafter"/>
</dbReference>
<dbReference type="GO" id="GO:0005524">
    <property type="term" value="F:ATP binding"/>
    <property type="evidence" value="ECO:0007669"/>
    <property type="project" value="UniProtKB-UniRule"/>
</dbReference>
<dbReference type="GO" id="GO:0003723">
    <property type="term" value="F:RNA binding"/>
    <property type="evidence" value="ECO:0007669"/>
    <property type="project" value="UniProtKB-KW"/>
</dbReference>
<dbReference type="GO" id="GO:0004831">
    <property type="term" value="F:tyrosine-tRNA ligase activity"/>
    <property type="evidence" value="ECO:0007669"/>
    <property type="project" value="UniProtKB-UniRule"/>
</dbReference>
<dbReference type="GO" id="GO:0006437">
    <property type="term" value="P:tyrosyl-tRNA aminoacylation"/>
    <property type="evidence" value="ECO:0007669"/>
    <property type="project" value="UniProtKB-UniRule"/>
</dbReference>
<dbReference type="CDD" id="cd00165">
    <property type="entry name" value="S4"/>
    <property type="match status" value="1"/>
</dbReference>
<dbReference type="CDD" id="cd00805">
    <property type="entry name" value="TyrRS_core"/>
    <property type="match status" value="1"/>
</dbReference>
<dbReference type="FunFam" id="1.10.240.10:FF:000006">
    <property type="entry name" value="Tyrosine--tRNA ligase"/>
    <property type="match status" value="1"/>
</dbReference>
<dbReference type="FunFam" id="3.40.50.620:FF:000061">
    <property type="entry name" value="Tyrosine--tRNA ligase"/>
    <property type="match status" value="1"/>
</dbReference>
<dbReference type="Gene3D" id="3.40.50.620">
    <property type="entry name" value="HUPs"/>
    <property type="match status" value="1"/>
</dbReference>
<dbReference type="Gene3D" id="3.10.290.10">
    <property type="entry name" value="RNA-binding S4 domain"/>
    <property type="match status" value="1"/>
</dbReference>
<dbReference type="Gene3D" id="1.10.240.10">
    <property type="entry name" value="Tyrosyl-Transfer RNA Synthetase"/>
    <property type="match status" value="1"/>
</dbReference>
<dbReference type="HAMAP" id="MF_02007">
    <property type="entry name" value="Tyr_tRNA_synth_type2"/>
    <property type="match status" value="1"/>
</dbReference>
<dbReference type="InterPro" id="IPR001412">
    <property type="entry name" value="aa-tRNA-synth_I_CS"/>
</dbReference>
<dbReference type="InterPro" id="IPR002305">
    <property type="entry name" value="aa-tRNA-synth_Ic"/>
</dbReference>
<dbReference type="InterPro" id="IPR014729">
    <property type="entry name" value="Rossmann-like_a/b/a_fold"/>
</dbReference>
<dbReference type="InterPro" id="IPR002942">
    <property type="entry name" value="S4_RNA-bd"/>
</dbReference>
<dbReference type="InterPro" id="IPR036986">
    <property type="entry name" value="S4_RNA-bd_sf"/>
</dbReference>
<dbReference type="InterPro" id="IPR002307">
    <property type="entry name" value="Tyr-tRNA-ligase"/>
</dbReference>
<dbReference type="InterPro" id="IPR024088">
    <property type="entry name" value="Tyr-tRNA-ligase_bac-type"/>
</dbReference>
<dbReference type="InterPro" id="IPR024108">
    <property type="entry name" value="Tyr-tRNA-ligase_bac_2"/>
</dbReference>
<dbReference type="NCBIfam" id="TIGR00234">
    <property type="entry name" value="tyrS"/>
    <property type="match status" value="1"/>
</dbReference>
<dbReference type="PANTHER" id="PTHR11766:SF1">
    <property type="entry name" value="TYROSINE--TRNA LIGASE"/>
    <property type="match status" value="1"/>
</dbReference>
<dbReference type="PANTHER" id="PTHR11766">
    <property type="entry name" value="TYROSYL-TRNA SYNTHETASE"/>
    <property type="match status" value="1"/>
</dbReference>
<dbReference type="Pfam" id="PF01479">
    <property type="entry name" value="S4"/>
    <property type="match status" value="1"/>
</dbReference>
<dbReference type="Pfam" id="PF00579">
    <property type="entry name" value="tRNA-synt_1b"/>
    <property type="match status" value="1"/>
</dbReference>
<dbReference type="PRINTS" id="PR01040">
    <property type="entry name" value="TRNASYNTHTYR"/>
</dbReference>
<dbReference type="SUPFAM" id="SSF55174">
    <property type="entry name" value="Alpha-L RNA-binding motif"/>
    <property type="match status" value="1"/>
</dbReference>
<dbReference type="SUPFAM" id="SSF52374">
    <property type="entry name" value="Nucleotidylyl transferase"/>
    <property type="match status" value="1"/>
</dbReference>
<dbReference type="PROSITE" id="PS00178">
    <property type="entry name" value="AA_TRNA_LIGASE_I"/>
    <property type="match status" value="1"/>
</dbReference>
<dbReference type="PROSITE" id="PS50889">
    <property type="entry name" value="S4"/>
    <property type="match status" value="1"/>
</dbReference>